<gene>
    <name evidence="1" type="primary">rpoC</name>
    <name type="ordered locus">YPK_0341</name>
</gene>
<reference key="1">
    <citation type="submission" date="2008-02" db="EMBL/GenBank/DDBJ databases">
        <title>Complete sequence of Yersinia pseudotuberculosis YPIII.</title>
        <authorList>
            <consortium name="US DOE Joint Genome Institute"/>
            <person name="Copeland A."/>
            <person name="Lucas S."/>
            <person name="Lapidus A."/>
            <person name="Glavina del Rio T."/>
            <person name="Dalin E."/>
            <person name="Tice H."/>
            <person name="Bruce D."/>
            <person name="Goodwin L."/>
            <person name="Pitluck S."/>
            <person name="Munk A.C."/>
            <person name="Brettin T."/>
            <person name="Detter J.C."/>
            <person name="Han C."/>
            <person name="Tapia R."/>
            <person name="Schmutz J."/>
            <person name="Larimer F."/>
            <person name="Land M."/>
            <person name="Hauser L."/>
            <person name="Challacombe J.F."/>
            <person name="Green L."/>
            <person name="Lindler L.E."/>
            <person name="Nikolich M.P."/>
            <person name="Richardson P."/>
        </authorList>
    </citation>
    <scope>NUCLEOTIDE SEQUENCE [LARGE SCALE GENOMIC DNA]</scope>
    <source>
        <strain>YPIII</strain>
    </source>
</reference>
<accession>B1JJK0</accession>
<keyword id="KW-0240">DNA-directed RNA polymerase</keyword>
<keyword id="KW-0460">Magnesium</keyword>
<keyword id="KW-0479">Metal-binding</keyword>
<keyword id="KW-0548">Nucleotidyltransferase</keyword>
<keyword id="KW-0804">Transcription</keyword>
<keyword id="KW-0808">Transferase</keyword>
<keyword id="KW-0862">Zinc</keyword>
<protein>
    <recommendedName>
        <fullName evidence="1">DNA-directed RNA polymerase subunit beta'</fullName>
        <shortName evidence="1">RNAP subunit beta'</shortName>
        <ecNumber evidence="1">2.7.7.6</ecNumber>
    </recommendedName>
    <alternativeName>
        <fullName evidence="1">RNA polymerase subunit beta'</fullName>
    </alternativeName>
    <alternativeName>
        <fullName evidence="1">Transcriptase subunit beta'</fullName>
    </alternativeName>
</protein>
<feature type="chain" id="PRO_0000353467" description="DNA-directed RNA polymerase subunit beta'">
    <location>
        <begin position="1"/>
        <end position="1406"/>
    </location>
</feature>
<feature type="binding site" evidence="1">
    <location>
        <position position="70"/>
    </location>
    <ligand>
        <name>Zn(2+)</name>
        <dbReference type="ChEBI" id="CHEBI:29105"/>
        <label>1</label>
    </ligand>
</feature>
<feature type="binding site" evidence="1">
    <location>
        <position position="72"/>
    </location>
    <ligand>
        <name>Zn(2+)</name>
        <dbReference type="ChEBI" id="CHEBI:29105"/>
        <label>1</label>
    </ligand>
</feature>
<feature type="binding site" evidence="1">
    <location>
        <position position="85"/>
    </location>
    <ligand>
        <name>Zn(2+)</name>
        <dbReference type="ChEBI" id="CHEBI:29105"/>
        <label>1</label>
    </ligand>
</feature>
<feature type="binding site" evidence="1">
    <location>
        <position position="88"/>
    </location>
    <ligand>
        <name>Zn(2+)</name>
        <dbReference type="ChEBI" id="CHEBI:29105"/>
        <label>1</label>
    </ligand>
</feature>
<feature type="binding site" evidence="1">
    <location>
        <position position="460"/>
    </location>
    <ligand>
        <name>Mg(2+)</name>
        <dbReference type="ChEBI" id="CHEBI:18420"/>
    </ligand>
</feature>
<feature type="binding site" evidence="1">
    <location>
        <position position="462"/>
    </location>
    <ligand>
        <name>Mg(2+)</name>
        <dbReference type="ChEBI" id="CHEBI:18420"/>
    </ligand>
</feature>
<feature type="binding site" evidence="1">
    <location>
        <position position="464"/>
    </location>
    <ligand>
        <name>Mg(2+)</name>
        <dbReference type="ChEBI" id="CHEBI:18420"/>
    </ligand>
</feature>
<feature type="binding site" evidence="1">
    <location>
        <position position="814"/>
    </location>
    <ligand>
        <name>Zn(2+)</name>
        <dbReference type="ChEBI" id="CHEBI:29105"/>
        <label>2</label>
    </ligand>
</feature>
<feature type="binding site" evidence="1">
    <location>
        <position position="888"/>
    </location>
    <ligand>
        <name>Zn(2+)</name>
        <dbReference type="ChEBI" id="CHEBI:29105"/>
        <label>2</label>
    </ligand>
</feature>
<feature type="binding site" evidence="1">
    <location>
        <position position="895"/>
    </location>
    <ligand>
        <name>Zn(2+)</name>
        <dbReference type="ChEBI" id="CHEBI:29105"/>
        <label>2</label>
    </ligand>
</feature>
<feature type="binding site" evidence="1">
    <location>
        <position position="898"/>
    </location>
    <ligand>
        <name>Zn(2+)</name>
        <dbReference type="ChEBI" id="CHEBI:29105"/>
        <label>2</label>
    </ligand>
</feature>
<sequence length="1406" mass="154904">MKDLLKFLKAQTKTEEFDAIKIALASPDMIRSWSFGEVKKPETINYRTFKPERDGLFCARIFGPVKDYECLCGKYKRLKHRGVICEKCGVEVTQTKVRRERMGHIELASPTAHIWFLKSLPSRIGLLLDMPLRDIERVLYFESYVVIEGGMTNLERRQILTEEQYLDALEEFGDEFDAKMGAEAIQALLKNMDLEAECEILREELNETNSETKRKKLTKRIKLLEAFVQSGNKPEWMILTVLPVLPPDLRPLVPLDGGRFATSDLNDLYRRVINRNNRLKRLLDLAAPDIIVRNEKRMLQEAVDALLDNGRRGRAITGSNKRPLKSLADMIKGKQGRFRQNLLGKRVDYSGRSVITVGPYLRLHQCGLPKKMALELFKPFIYGKLELRGLATTIKAAKKMVEREEAVVWDILDEVIREHPVLLNRAPTLHRLGIQAFEPVLIEGKAIQLHPLVCAAYNADFDGDQMAVHVPLTLEAQLEARALMMSTNNILSPANGEPIIVPSQDVVLGLYYMTRDCVNAKGEGMVLTGPKEAERIYRAGLASLHARVKVRITEEIRNTEGESITRTSIIDTTVGRAILWMIVPQGLPYSIVNQPLGKKAISKMLNTCYRILGLKPTVIFADQIMYTGFAYAARSGASVGIDDMVIPEAKAGIIEEAETEVAEIQEQFQSGLVTAGERYNKVIDIWAAANERVAKAMMDNLSVEDVVNRDGVVEQQVSFNSIFMMADSGARGSAAQIRQLAGMRGLMAKPDGSIIETPITANFREGLNVLQYFISTHGARKGLADTALKTANSGYLTRRLVDVAQDLVVTEDDCGTHNGIVMTPVIEGGDVKEPLRDRVLGRVTAEEVIKPGSADILVPRNTLLDEKWCDLLEENSVDSVKVRSVVSCETDFGVCANCYGRDLARGHIINKGEAVGVIAAQSIGEPGTQLTMRTFHIGGAASRAAAESSIQVKNKGSLKLSNVKFVTNAAGKLVITSRNTELKLIDEFGRTKESYKVPYGAVMAKGDGAEVQGGETVANWDPHIMPVVTEVSGFIRFADMVDGQTITRQTDELTGLSSLVVLDSAERTGSGKDLRPALKIVDAKGNDVLIPGTDMPAQYFLPGKAIVQLEDGIQIGAGDTLARIPQESSGTKDITGGLPRVADLFEARRPKEPAILAEISGIISFGKETKGKRRLVISPLDGSDAYEEMIPKWRQLNVFEGEVVERGDVVSDGPESPHDILRLRGVHAVTRYITNEVQEVYRLQGVKINDKHIEVIVRQMLRKGTIVDAGSTDFLEGEQAEMSRVKIANRKLAAEGKIEATFTRDLLGITKASLATESFISAASFQETTRVLTEAAVAGKRDELRGLKENVIVGRLIPAGTGYAYHQDRMRRKAQGEAPVVPQVSADEATANLAELLNAGFGNNKG</sequence>
<organism>
    <name type="scientific">Yersinia pseudotuberculosis serotype O:3 (strain YPIII)</name>
    <dbReference type="NCBI Taxonomy" id="502800"/>
    <lineage>
        <taxon>Bacteria</taxon>
        <taxon>Pseudomonadati</taxon>
        <taxon>Pseudomonadota</taxon>
        <taxon>Gammaproteobacteria</taxon>
        <taxon>Enterobacterales</taxon>
        <taxon>Yersiniaceae</taxon>
        <taxon>Yersinia</taxon>
    </lineage>
</organism>
<comment type="function">
    <text evidence="1">DNA-dependent RNA polymerase catalyzes the transcription of DNA into RNA using the four ribonucleoside triphosphates as substrates.</text>
</comment>
<comment type="catalytic activity">
    <reaction evidence="1">
        <text>RNA(n) + a ribonucleoside 5'-triphosphate = RNA(n+1) + diphosphate</text>
        <dbReference type="Rhea" id="RHEA:21248"/>
        <dbReference type="Rhea" id="RHEA-COMP:14527"/>
        <dbReference type="Rhea" id="RHEA-COMP:17342"/>
        <dbReference type="ChEBI" id="CHEBI:33019"/>
        <dbReference type="ChEBI" id="CHEBI:61557"/>
        <dbReference type="ChEBI" id="CHEBI:140395"/>
        <dbReference type="EC" id="2.7.7.6"/>
    </reaction>
</comment>
<comment type="cofactor">
    <cofactor evidence="1">
        <name>Mg(2+)</name>
        <dbReference type="ChEBI" id="CHEBI:18420"/>
    </cofactor>
    <text evidence="1">Binds 1 Mg(2+) ion per subunit.</text>
</comment>
<comment type="cofactor">
    <cofactor evidence="1">
        <name>Zn(2+)</name>
        <dbReference type="ChEBI" id="CHEBI:29105"/>
    </cofactor>
    <text evidence="1">Binds 2 Zn(2+) ions per subunit.</text>
</comment>
<comment type="subunit">
    <text evidence="1">The RNAP catalytic core consists of 2 alpha, 1 beta, 1 beta' and 1 omega subunit. When a sigma factor is associated with the core the holoenzyme is formed, which can initiate transcription.</text>
</comment>
<comment type="similarity">
    <text evidence="1">Belongs to the RNA polymerase beta' chain family.</text>
</comment>
<name>RPOC_YERPY</name>
<proteinExistence type="inferred from homology"/>
<evidence type="ECO:0000255" key="1">
    <source>
        <dbReference type="HAMAP-Rule" id="MF_01322"/>
    </source>
</evidence>
<dbReference type="EC" id="2.7.7.6" evidence="1"/>
<dbReference type="EMBL" id="CP000950">
    <property type="protein sequence ID" value="ACA66651.1"/>
    <property type="molecule type" value="Genomic_DNA"/>
</dbReference>
<dbReference type="RefSeq" id="WP_002210677.1">
    <property type="nucleotide sequence ID" value="NZ_CP009792.1"/>
</dbReference>
<dbReference type="SMR" id="B1JJK0"/>
<dbReference type="GeneID" id="96663777"/>
<dbReference type="KEGG" id="ypy:YPK_0341"/>
<dbReference type="PATRIC" id="fig|502800.11.peg.944"/>
<dbReference type="GO" id="GO:0000428">
    <property type="term" value="C:DNA-directed RNA polymerase complex"/>
    <property type="evidence" value="ECO:0007669"/>
    <property type="project" value="UniProtKB-KW"/>
</dbReference>
<dbReference type="GO" id="GO:0003677">
    <property type="term" value="F:DNA binding"/>
    <property type="evidence" value="ECO:0007669"/>
    <property type="project" value="UniProtKB-UniRule"/>
</dbReference>
<dbReference type="GO" id="GO:0003899">
    <property type="term" value="F:DNA-directed RNA polymerase activity"/>
    <property type="evidence" value="ECO:0007669"/>
    <property type="project" value="UniProtKB-UniRule"/>
</dbReference>
<dbReference type="GO" id="GO:0000287">
    <property type="term" value="F:magnesium ion binding"/>
    <property type="evidence" value="ECO:0007669"/>
    <property type="project" value="UniProtKB-UniRule"/>
</dbReference>
<dbReference type="GO" id="GO:0008270">
    <property type="term" value="F:zinc ion binding"/>
    <property type="evidence" value="ECO:0007669"/>
    <property type="project" value="UniProtKB-UniRule"/>
</dbReference>
<dbReference type="GO" id="GO:0006351">
    <property type="term" value="P:DNA-templated transcription"/>
    <property type="evidence" value="ECO:0007669"/>
    <property type="project" value="UniProtKB-UniRule"/>
</dbReference>
<dbReference type="CDD" id="cd02655">
    <property type="entry name" value="RNAP_beta'_C"/>
    <property type="match status" value="1"/>
</dbReference>
<dbReference type="CDD" id="cd01609">
    <property type="entry name" value="RNAP_beta'_N"/>
    <property type="match status" value="1"/>
</dbReference>
<dbReference type="FunFam" id="1.10.132.30:FF:000003">
    <property type="entry name" value="DNA-directed RNA polymerase subunit beta"/>
    <property type="match status" value="1"/>
</dbReference>
<dbReference type="FunFam" id="1.10.150.390:FF:000002">
    <property type="entry name" value="DNA-directed RNA polymerase subunit beta"/>
    <property type="match status" value="1"/>
</dbReference>
<dbReference type="FunFam" id="1.10.274.100:FF:000002">
    <property type="entry name" value="DNA-directed RNA polymerase subunit beta"/>
    <property type="match status" value="1"/>
</dbReference>
<dbReference type="FunFam" id="1.10.40.90:FF:000001">
    <property type="entry name" value="DNA-directed RNA polymerase subunit beta"/>
    <property type="match status" value="1"/>
</dbReference>
<dbReference type="FunFam" id="2.40.50.100:FF:000012">
    <property type="entry name" value="DNA-directed RNA polymerase subunit beta"/>
    <property type="match status" value="1"/>
</dbReference>
<dbReference type="FunFam" id="2.40.50.100:FF:000016">
    <property type="entry name" value="DNA-directed RNA polymerase subunit beta"/>
    <property type="match status" value="1"/>
</dbReference>
<dbReference type="FunFam" id="2.40.50.100:FF:000019">
    <property type="entry name" value="DNA-directed RNA polymerase subunit beta"/>
    <property type="match status" value="1"/>
</dbReference>
<dbReference type="FunFam" id="4.10.860.120:FF:000001">
    <property type="entry name" value="DNA-directed RNA polymerase subunit beta"/>
    <property type="match status" value="1"/>
</dbReference>
<dbReference type="Gene3D" id="1.10.132.30">
    <property type="match status" value="1"/>
</dbReference>
<dbReference type="Gene3D" id="1.10.150.390">
    <property type="match status" value="1"/>
</dbReference>
<dbReference type="Gene3D" id="1.10.1790.20">
    <property type="match status" value="1"/>
</dbReference>
<dbReference type="Gene3D" id="1.10.40.90">
    <property type="match status" value="1"/>
</dbReference>
<dbReference type="Gene3D" id="2.40.40.20">
    <property type="match status" value="1"/>
</dbReference>
<dbReference type="Gene3D" id="2.40.50.100">
    <property type="match status" value="3"/>
</dbReference>
<dbReference type="Gene3D" id="4.10.860.120">
    <property type="entry name" value="RNA polymerase II, clamp domain"/>
    <property type="match status" value="1"/>
</dbReference>
<dbReference type="Gene3D" id="1.10.274.100">
    <property type="entry name" value="RNA polymerase Rpb1, domain 3"/>
    <property type="match status" value="1"/>
</dbReference>
<dbReference type="HAMAP" id="MF_01322">
    <property type="entry name" value="RNApol_bact_RpoC"/>
    <property type="match status" value="1"/>
</dbReference>
<dbReference type="InterPro" id="IPR045867">
    <property type="entry name" value="DNA-dir_RpoC_beta_prime"/>
</dbReference>
<dbReference type="InterPro" id="IPR012754">
    <property type="entry name" value="DNA-dir_RpoC_beta_prime_bact"/>
</dbReference>
<dbReference type="InterPro" id="IPR000722">
    <property type="entry name" value="RNA_pol_asu"/>
</dbReference>
<dbReference type="InterPro" id="IPR006592">
    <property type="entry name" value="RNA_pol_N"/>
</dbReference>
<dbReference type="InterPro" id="IPR007080">
    <property type="entry name" value="RNA_pol_Rpb1_1"/>
</dbReference>
<dbReference type="InterPro" id="IPR007066">
    <property type="entry name" value="RNA_pol_Rpb1_3"/>
</dbReference>
<dbReference type="InterPro" id="IPR042102">
    <property type="entry name" value="RNA_pol_Rpb1_3_sf"/>
</dbReference>
<dbReference type="InterPro" id="IPR007083">
    <property type="entry name" value="RNA_pol_Rpb1_4"/>
</dbReference>
<dbReference type="InterPro" id="IPR007081">
    <property type="entry name" value="RNA_pol_Rpb1_5"/>
</dbReference>
<dbReference type="InterPro" id="IPR044893">
    <property type="entry name" value="RNA_pol_Rpb1_clamp_domain"/>
</dbReference>
<dbReference type="InterPro" id="IPR038120">
    <property type="entry name" value="Rpb1_funnel_sf"/>
</dbReference>
<dbReference type="NCBIfam" id="TIGR02386">
    <property type="entry name" value="rpoC_TIGR"/>
    <property type="match status" value="1"/>
</dbReference>
<dbReference type="PANTHER" id="PTHR19376">
    <property type="entry name" value="DNA-DIRECTED RNA POLYMERASE"/>
    <property type="match status" value="1"/>
</dbReference>
<dbReference type="PANTHER" id="PTHR19376:SF54">
    <property type="entry name" value="DNA-DIRECTED RNA POLYMERASE SUBUNIT BETA"/>
    <property type="match status" value="1"/>
</dbReference>
<dbReference type="Pfam" id="PF04997">
    <property type="entry name" value="RNA_pol_Rpb1_1"/>
    <property type="match status" value="1"/>
</dbReference>
<dbReference type="Pfam" id="PF00623">
    <property type="entry name" value="RNA_pol_Rpb1_2"/>
    <property type="match status" value="2"/>
</dbReference>
<dbReference type="Pfam" id="PF04983">
    <property type="entry name" value="RNA_pol_Rpb1_3"/>
    <property type="match status" value="1"/>
</dbReference>
<dbReference type="Pfam" id="PF05000">
    <property type="entry name" value="RNA_pol_Rpb1_4"/>
    <property type="match status" value="1"/>
</dbReference>
<dbReference type="Pfam" id="PF04998">
    <property type="entry name" value="RNA_pol_Rpb1_5"/>
    <property type="match status" value="1"/>
</dbReference>
<dbReference type="SMART" id="SM00663">
    <property type="entry name" value="RPOLA_N"/>
    <property type="match status" value="1"/>
</dbReference>
<dbReference type="SUPFAM" id="SSF64484">
    <property type="entry name" value="beta and beta-prime subunits of DNA dependent RNA-polymerase"/>
    <property type="match status" value="1"/>
</dbReference>